<accession>P17056</accession>
<accession>D5AP73</accession>
<gene>
    <name type="primary">crtB</name>
    <name type="ordered locus">RCAP_rcc00680</name>
</gene>
<organism>
    <name type="scientific">Rhodobacter capsulatus (strain ATCC BAA-309 / NBRC 16581 / SB1003)</name>
    <dbReference type="NCBI Taxonomy" id="272942"/>
    <lineage>
        <taxon>Bacteria</taxon>
        <taxon>Pseudomonadati</taxon>
        <taxon>Pseudomonadota</taxon>
        <taxon>Alphaproteobacteria</taxon>
        <taxon>Rhodobacterales</taxon>
        <taxon>Rhodobacter group</taxon>
        <taxon>Rhodobacter</taxon>
    </lineage>
</organism>
<evidence type="ECO:0000250" key="1"/>
<evidence type="ECO:0000305" key="2"/>
<sequence>MIAEADMEVCRELIRTGSYSFHAASRVLPARVRDPALALYAFCRVADDEVDEVGAPRDKAAAVLKLGDRLEDIYAGRPRNAPSDRAFAAVVEEFEMPRELPEALLEGFAWDAEGRWYHTLSDVQAYSARVAAAVGAMMCVLMRVRNPDALARACDLGLAMQMSNIARDVGEDARAGRLFLPTDWMVEEGIDPQAFLADPQPTKGIRRVTERLLNRADRLYWRAATGVRLLPFDCRPGIMAAGKIYAAIGAEVAKAKYDNITRRAHTTKGRKLWLVANSAMSATATSMLPLSPRVHAKPEPEVAHLVDAAAHRNLHPERSEVLISALMALKARDRGLAMD</sequence>
<comment type="function">
    <text evidence="1">Involved in the biosynthesis of carotenoids. Catalyzes the condensation of two molecules of geranylgeranyl diphosphate (GGPP) to give prephytoene diphosphate (PPPP) and the subsequent rearrangement of the cyclopropylcarbinyl intermediate to yield phytoene (By similarity).</text>
</comment>
<comment type="cofactor">
    <cofactor evidence="1">
        <name>ATP</name>
        <dbReference type="ChEBI" id="CHEBI:30616"/>
    </cofactor>
    <text evidence="1">ATP is required for the transferase activity but it does not seem to be hydrolyzed during the reaction.</text>
</comment>
<comment type="cofactor">
    <cofactor evidence="1">
        <name>Mn(2+)</name>
        <dbReference type="ChEBI" id="CHEBI:29035"/>
    </cofactor>
    <cofactor evidence="1">
        <name>Mg(2+)</name>
        <dbReference type="ChEBI" id="CHEBI:18420"/>
    </cofactor>
</comment>
<comment type="pathway">
    <text>Carotenoid biosynthesis; phytoene biosynthesis.</text>
</comment>
<comment type="similarity">
    <text evidence="2">Belongs to the phytoene/squalene synthase family.</text>
</comment>
<dbReference type="EC" id="2.5.1.-"/>
<dbReference type="EMBL" id="X52291">
    <property type="protein sequence ID" value="CAA36534.1"/>
    <property type="molecule type" value="Genomic_DNA"/>
</dbReference>
<dbReference type="EMBL" id="Z11165">
    <property type="protein sequence ID" value="CAA77541.1"/>
    <property type="molecule type" value="Genomic_DNA"/>
</dbReference>
<dbReference type="EMBL" id="CP001312">
    <property type="protein sequence ID" value="ADE84445.1"/>
    <property type="molecule type" value="Genomic_DNA"/>
</dbReference>
<dbReference type="PIR" id="S04403">
    <property type="entry name" value="S04403"/>
</dbReference>
<dbReference type="RefSeq" id="WP_013066424.1">
    <property type="nucleotide sequence ID" value="NC_014034.1"/>
</dbReference>
<dbReference type="SMR" id="P17056"/>
<dbReference type="STRING" id="272942.RCAP_rcc00680"/>
<dbReference type="GeneID" id="31489626"/>
<dbReference type="KEGG" id="rcp:RCAP_rcc00680"/>
<dbReference type="eggNOG" id="COG1562">
    <property type="taxonomic scope" value="Bacteria"/>
</dbReference>
<dbReference type="HOGENOM" id="CLU_037269_1_0_5"/>
<dbReference type="OrthoDB" id="9807580at2"/>
<dbReference type="BioCyc" id="MetaCyc:MONOMER-14934"/>
<dbReference type="UniPathway" id="UPA00799"/>
<dbReference type="Proteomes" id="UP000002361">
    <property type="component" value="Chromosome"/>
</dbReference>
<dbReference type="GO" id="GO:0046905">
    <property type="term" value="F:15-cis-phytoene synthase activity"/>
    <property type="evidence" value="ECO:0000250"/>
    <property type="project" value="UniProtKB"/>
</dbReference>
<dbReference type="GO" id="GO:0004311">
    <property type="term" value="F:geranylgeranyl diphosphate synthase activity"/>
    <property type="evidence" value="ECO:0007669"/>
    <property type="project" value="InterPro"/>
</dbReference>
<dbReference type="GO" id="GO:0046872">
    <property type="term" value="F:metal ion binding"/>
    <property type="evidence" value="ECO:0007669"/>
    <property type="project" value="UniProtKB-KW"/>
</dbReference>
<dbReference type="GO" id="GO:0051996">
    <property type="term" value="F:squalene synthase [NAD(P)H] activity"/>
    <property type="evidence" value="ECO:0007669"/>
    <property type="project" value="InterPro"/>
</dbReference>
<dbReference type="GO" id="GO:0016117">
    <property type="term" value="P:carotenoid biosynthetic process"/>
    <property type="evidence" value="ECO:0000250"/>
    <property type="project" value="UniProtKB"/>
</dbReference>
<dbReference type="CDD" id="cd00683">
    <property type="entry name" value="Trans_IPPS_HH"/>
    <property type="match status" value="1"/>
</dbReference>
<dbReference type="FunFam" id="1.10.600.10:FF:000020">
    <property type="entry name" value="Phytoene synthase"/>
    <property type="match status" value="1"/>
</dbReference>
<dbReference type="Gene3D" id="1.10.600.10">
    <property type="entry name" value="Farnesyl Diphosphate Synthase"/>
    <property type="match status" value="1"/>
</dbReference>
<dbReference type="InterPro" id="IPR008949">
    <property type="entry name" value="Isoprenoid_synthase_dom_sf"/>
</dbReference>
<dbReference type="InterPro" id="IPR002060">
    <property type="entry name" value="Squ/phyt_synthse"/>
</dbReference>
<dbReference type="InterPro" id="IPR019845">
    <property type="entry name" value="Squalene/phytoene_synthase_CS"/>
</dbReference>
<dbReference type="InterPro" id="IPR044843">
    <property type="entry name" value="Trans_IPPS_bact-type"/>
</dbReference>
<dbReference type="InterPro" id="IPR033904">
    <property type="entry name" value="Trans_IPPS_HH"/>
</dbReference>
<dbReference type="NCBIfam" id="NF045921">
    <property type="entry name" value="PhytnSynCrtBRhod"/>
    <property type="match status" value="1"/>
</dbReference>
<dbReference type="PANTHER" id="PTHR31480">
    <property type="entry name" value="BIFUNCTIONAL LYCOPENE CYCLASE/PHYTOENE SYNTHASE"/>
    <property type="match status" value="1"/>
</dbReference>
<dbReference type="Pfam" id="PF00494">
    <property type="entry name" value="SQS_PSY"/>
    <property type="match status" value="1"/>
</dbReference>
<dbReference type="SFLD" id="SFLDS00005">
    <property type="entry name" value="Isoprenoid_Synthase_Type_I"/>
    <property type="match status" value="1"/>
</dbReference>
<dbReference type="SFLD" id="SFLDG01212">
    <property type="entry name" value="Phytoene_synthase_like"/>
    <property type="match status" value="1"/>
</dbReference>
<dbReference type="SUPFAM" id="SSF48576">
    <property type="entry name" value="Terpenoid synthases"/>
    <property type="match status" value="1"/>
</dbReference>
<dbReference type="PROSITE" id="PS01044">
    <property type="entry name" value="SQUALEN_PHYTOEN_SYN_1"/>
    <property type="match status" value="1"/>
</dbReference>
<dbReference type="PROSITE" id="PS01045">
    <property type="entry name" value="SQUALEN_PHYTOEN_SYN_2"/>
    <property type="match status" value="1"/>
</dbReference>
<name>CRTB_RHOCB</name>
<keyword id="KW-0125">Carotenoid biosynthesis</keyword>
<keyword id="KW-0460">Magnesium</keyword>
<keyword id="KW-0464">Manganese</keyword>
<keyword id="KW-0479">Metal-binding</keyword>
<keyword id="KW-1185">Reference proteome</keyword>
<keyword id="KW-0808">Transferase</keyword>
<reference key="1">
    <citation type="journal article" date="1989" name="Mol. Gen. Genet.">
        <title>Nucleotide sequence, organization, and nature of the protein products of the carotenoid biosynthesis gene cluster of Rhodobacter capsulatus.</title>
        <authorList>
            <person name="Armstrong G.A."/>
            <person name="Alberti M."/>
            <person name="Leach F."/>
            <person name="Hearst J.E."/>
        </authorList>
    </citation>
    <scope>NUCLEOTIDE SEQUENCE [GENOMIC DNA]</scope>
    <source>
        <strain>ATCC BAA-309 / NBRC 16581 / SB1003</strain>
    </source>
</reference>
<reference key="2">
    <citation type="journal article" date="2010" name="J. Bacteriol.">
        <title>Complete genome sequence of the photosynthetic purple nonsulfur bacterium Rhodobacter capsulatus SB 1003.</title>
        <authorList>
            <person name="Strnad H."/>
            <person name="Lapidus A."/>
            <person name="Paces J."/>
            <person name="Ulbrich P."/>
            <person name="Vlcek C."/>
            <person name="Paces V."/>
            <person name="Haselkorn R."/>
        </authorList>
    </citation>
    <scope>NUCLEOTIDE SEQUENCE [LARGE SCALE GENOMIC DNA]</scope>
    <source>
        <strain>ATCC BAA-309 / NBRC 16581 / SB1003</strain>
    </source>
</reference>
<protein>
    <recommendedName>
        <fullName>Phytoene synthase</fullName>
        <shortName>PSase</shortName>
        <ecNumber>2.5.1.-</ecNumber>
    </recommendedName>
</protein>
<proteinExistence type="inferred from homology"/>
<feature type="chain" id="PRO_0000067433" description="Phytoene synthase">
    <location>
        <begin position="1"/>
        <end position="339"/>
    </location>
</feature>